<comment type="function">
    <text evidence="5 6">Components of the endosome-vacuole trafficking pathway that regulates nutrient transport. May be involved in processes which determine whether plasma membrane proteins are degraded or routed to the plasma membrane. Confers leflunomide resistance when overexpressed.</text>
</comment>
<comment type="subcellular location">
    <subcellularLocation>
        <location evidence="5">Vacuole membrane</location>
        <topology evidence="5">Single-pass type II membrane protein</topology>
    </subcellularLocation>
    <subcellularLocation>
        <location evidence="5">Endosome membrane</location>
        <topology evidence="5">Single-pass type II membrane protein</topology>
    </subcellularLocation>
</comment>
<comment type="miscellaneous">
    <text evidence="4">Present with 450 molecules/cell in log phase SD medium.</text>
</comment>
<comment type="similarity">
    <text evidence="7">Belongs to the SSH4 family.</text>
</comment>
<keyword id="KW-0967">Endosome</keyword>
<keyword id="KW-0325">Glycoprotein</keyword>
<keyword id="KW-1017">Isopeptide bond</keyword>
<keyword id="KW-0472">Membrane</keyword>
<keyword id="KW-0597">Phosphoprotein</keyword>
<keyword id="KW-0653">Protein transport</keyword>
<keyword id="KW-1185">Reference proteome</keyword>
<keyword id="KW-0735">Signal-anchor</keyword>
<keyword id="KW-0812">Transmembrane</keyword>
<keyword id="KW-1133">Transmembrane helix</keyword>
<keyword id="KW-0813">Transport</keyword>
<keyword id="KW-0832">Ubl conjugation</keyword>
<keyword id="KW-0926">Vacuole</keyword>
<proteinExistence type="evidence at protein level"/>
<feature type="chain" id="PRO_0000203153" description="Protein SSH4">
    <location>
        <begin position="1"/>
        <end position="579"/>
    </location>
</feature>
<feature type="topological domain" description="Cytoplasmic" evidence="1">
    <location>
        <begin position="1"/>
        <end position="44"/>
    </location>
</feature>
<feature type="transmembrane region" description="Helical; Signal-anchor for type II membrane protein" evidence="1">
    <location>
        <begin position="45"/>
        <end position="65"/>
    </location>
</feature>
<feature type="topological domain" description="Lumenal" evidence="1">
    <location>
        <begin position="66"/>
        <end position="579"/>
    </location>
</feature>
<feature type="domain" description="B30.2/SPRY" evidence="2">
    <location>
        <begin position="166"/>
        <end position="364"/>
    </location>
</feature>
<feature type="region of interest" description="Disordered" evidence="3">
    <location>
        <begin position="499"/>
        <end position="579"/>
    </location>
</feature>
<feature type="compositionally biased region" description="Low complexity" evidence="3">
    <location>
        <begin position="509"/>
        <end position="525"/>
    </location>
</feature>
<feature type="compositionally biased region" description="Basic residues" evidence="3">
    <location>
        <begin position="555"/>
        <end position="579"/>
    </location>
</feature>
<feature type="modified residue" description="Phosphoserine" evidence="8 9 10">
    <location>
        <position position="358"/>
    </location>
</feature>
<feature type="glycosylation site" description="N-linked (GlcNAc...) asparagine" evidence="1">
    <location>
        <position position="212"/>
    </location>
</feature>
<feature type="glycosylation site" description="N-linked (GlcNAc...) asparagine" evidence="1">
    <location>
        <position position="356"/>
    </location>
</feature>
<feature type="glycosylation site" description="N-linked (GlcNAc...) asparagine" evidence="1">
    <location>
        <position position="430"/>
    </location>
</feature>
<feature type="glycosylation site" description="N-linked (GlcNAc...) asparagine" evidence="1">
    <location>
        <position position="507"/>
    </location>
</feature>
<feature type="glycosylation site" description="N-linked (GlcNAc...) asparagine" evidence="1">
    <location>
        <position position="557"/>
    </location>
</feature>
<feature type="glycosylation site" description="N-linked (GlcNAc...) asparagine" evidence="1">
    <location>
        <position position="575"/>
    </location>
</feature>
<feature type="cross-link" description="Glycyl lysine isopeptide (Lys-Gly) (interchain with G-Cter in ubiquitin)" evidence="11">
    <location>
        <position position="367"/>
    </location>
</feature>
<sequence length="579" mass="65061">MYVTFNEALDSSFGNLESPNHDFKVGDPNMVPTPPMDSDSAAISLAFLISLSITFAILMLILVVIAAYVTFCGDDESEYDEENALGTRTSGTLHSLFGKKHSGILLDSSFASPGGFDDEIVLQERELEELPKMSAYEVELYIRAKEFQMMSPPMVKDFGTYLDSDDQQFIKDRGIQSYFLLPSINDNIDEYGNFLPSFIVQDKLDIQFSKFNKSSSTVMNYPLPHNRKDAVYFEVKIFRHIQKSNSIFSIGLTTVPYPYFRVPGMAKYSIAYESTGKLRINNPFTASTLLPKLEEGDTVGFGYRYKTGTIFITHNGKKLMDVTQNIGIDLFIGIGAFNAAYTRTYTRDGLLEDPDNVSFREALSEGKDIEVAKDLQRVHDPHDESDEMTSDEVELHVNLGQVGFVFIEANVKKYAFGSVYGQIGIPPAYNGTEIKKDTILQKGEELPPRYADTDNFFGSMKVKEGSSSRITAQTSKPLWSVGTYERISSNFDRENNVYHDSLETDDNNTDNNVNNNDENAGCNENSPLLEDDGNKRPENSNTPREVSDGAINKNPRNKSTKKRQRNRGKSSKKKNRSRK</sequence>
<accession>P32343</accession>
<accession>D6VX71</accession>
<reference key="1">
    <citation type="journal article" date="1994" name="Nature">
        <title>Complete DNA sequence of yeast chromosome XI.</title>
        <authorList>
            <person name="Dujon B."/>
            <person name="Alexandraki D."/>
            <person name="Andre B."/>
            <person name="Ansorge W."/>
            <person name="Baladron V."/>
            <person name="Ballesta J.P.G."/>
            <person name="Banrevi A."/>
            <person name="Bolle P.-A."/>
            <person name="Bolotin-Fukuhara M."/>
            <person name="Bossier P."/>
            <person name="Bou G."/>
            <person name="Boyer J."/>
            <person name="Buitrago M.J."/>
            <person name="Cheret G."/>
            <person name="Colleaux L."/>
            <person name="Daignan-Fornier B."/>
            <person name="del Rey F."/>
            <person name="Dion C."/>
            <person name="Domdey H."/>
            <person name="Duesterhoeft A."/>
            <person name="Duesterhus S."/>
            <person name="Entian K.-D."/>
            <person name="Erfle H."/>
            <person name="Esteban P.F."/>
            <person name="Feldmann H."/>
            <person name="Fernandes L."/>
            <person name="Fobo G.M."/>
            <person name="Fritz C."/>
            <person name="Fukuhara H."/>
            <person name="Gabel C."/>
            <person name="Gaillon L."/>
            <person name="Garcia-Cantalejo J.M."/>
            <person name="Garcia-Ramirez J.J."/>
            <person name="Gent M.E."/>
            <person name="Ghazvini M."/>
            <person name="Goffeau A."/>
            <person name="Gonzalez A."/>
            <person name="Grothues D."/>
            <person name="Guerreiro P."/>
            <person name="Hegemann J.H."/>
            <person name="Hewitt N."/>
            <person name="Hilger F."/>
            <person name="Hollenberg C.P."/>
            <person name="Horaitis O."/>
            <person name="Indge K.J."/>
            <person name="Jacquier A."/>
            <person name="James C.M."/>
            <person name="Jauniaux J.-C."/>
            <person name="Jimenez A."/>
            <person name="Keuchel H."/>
            <person name="Kirchrath L."/>
            <person name="Kleine K."/>
            <person name="Koetter P."/>
            <person name="Legrain P."/>
            <person name="Liebl S."/>
            <person name="Louis E.J."/>
            <person name="Maia e Silva A."/>
            <person name="Marck C."/>
            <person name="Monnier A.-L."/>
            <person name="Moestl D."/>
            <person name="Mueller S."/>
            <person name="Obermaier B."/>
            <person name="Oliver S.G."/>
            <person name="Pallier C."/>
            <person name="Pascolo S."/>
            <person name="Pfeiffer F."/>
            <person name="Philippsen P."/>
            <person name="Planta R.J."/>
            <person name="Pohl F.M."/>
            <person name="Pohl T.M."/>
            <person name="Poehlmann R."/>
            <person name="Portetelle D."/>
            <person name="Purnelle B."/>
            <person name="Puzos V."/>
            <person name="Ramezani Rad M."/>
            <person name="Rasmussen S.W."/>
            <person name="Remacha M.A."/>
            <person name="Revuelta J.L."/>
            <person name="Richard G.-F."/>
            <person name="Rieger M."/>
            <person name="Rodrigues-Pousada C."/>
            <person name="Rose M."/>
            <person name="Rupp T."/>
            <person name="Santos M.A."/>
            <person name="Schwager C."/>
            <person name="Sensen C."/>
            <person name="Skala J."/>
            <person name="Soares H."/>
            <person name="Sor F."/>
            <person name="Stegemann J."/>
            <person name="Tettelin H."/>
            <person name="Thierry A."/>
            <person name="Tzermia M."/>
            <person name="Urrestarazu L.A."/>
            <person name="van Dyck L."/>
            <person name="van Vliet-Reedijk J.C."/>
            <person name="Valens M."/>
            <person name="Vandenbol M."/>
            <person name="Vilela C."/>
            <person name="Vissers S."/>
            <person name="von Wettstein D."/>
            <person name="Voss H."/>
            <person name="Wiemann S."/>
            <person name="Xu G."/>
            <person name="Zimmermann J."/>
            <person name="Haasemann M."/>
            <person name="Becker I."/>
            <person name="Mewes H.-W."/>
        </authorList>
    </citation>
    <scope>NUCLEOTIDE SEQUENCE [LARGE SCALE GENOMIC DNA]</scope>
    <source>
        <strain>ATCC 204508 / S288c</strain>
    </source>
</reference>
<reference key="2">
    <citation type="journal article" date="2014" name="G3 (Bethesda)">
        <title>The reference genome sequence of Saccharomyces cerevisiae: Then and now.</title>
        <authorList>
            <person name="Engel S.R."/>
            <person name="Dietrich F.S."/>
            <person name="Fisk D.G."/>
            <person name="Binkley G."/>
            <person name="Balakrishnan R."/>
            <person name="Costanzo M.C."/>
            <person name="Dwight S.S."/>
            <person name="Hitz B.C."/>
            <person name="Karra K."/>
            <person name="Nash R.S."/>
            <person name="Weng S."/>
            <person name="Wong E.D."/>
            <person name="Lloyd P."/>
            <person name="Skrzypek M.S."/>
            <person name="Miyasato S.R."/>
            <person name="Simison M."/>
            <person name="Cherry J.M."/>
        </authorList>
    </citation>
    <scope>GENOME REANNOTATION</scope>
    <source>
        <strain>ATCC 204508 / S288c</strain>
    </source>
</reference>
<reference key="3">
    <citation type="journal article" date="1992" name="Yeast">
        <title>Sequence of a segment of yeast chromosome XI identifies a new mitochondrial carrier, a new member of the G protein family, and a protein with the PAAKK motif of the H1 histones.</title>
        <authorList>
            <person name="Colleaux L."/>
            <person name="Richard G.-F."/>
            <person name="Thierry A."/>
            <person name="Dujon B."/>
        </authorList>
    </citation>
    <scope>NUCLEOTIDE SEQUENCE [GENOMIC DNA] OF 41-579</scope>
</reference>
<reference key="4">
    <citation type="journal article" date="1998" name="Biochem. Biophys. Res. Commun.">
        <title>Molecular cloning of Saccharomyces cerevisiae MLF4/SSH4 gene which confers the immunosuppressant leflunomide resistance.</title>
        <authorList>
            <person name="Fujimura H."/>
        </authorList>
    </citation>
    <scope>FUNCTION</scope>
</reference>
<reference key="5">
    <citation type="journal article" date="2003" name="Nature">
        <title>Global analysis of protein expression in yeast.</title>
        <authorList>
            <person name="Ghaemmaghami S."/>
            <person name="Huh W.-K."/>
            <person name="Bower K."/>
            <person name="Howson R.W."/>
            <person name="Belle A."/>
            <person name="Dephoure N."/>
            <person name="O'Shea E.K."/>
            <person name="Weissman J.S."/>
        </authorList>
    </citation>
    <scope>LEVEL OF PROTEIN EXPRESSION [LARGE SCALE ANALYSIS]</scope>
</reference>
<reference key="6">
    <citation type="journal article" date="2007" name="Genetics">
        <title>Ssh4, Rcr2 and Rcr1 affect plasma membrane transporter activity in Saccharomyces cerevisiae.</title>
        <authorList>
            <person name="Kota J."/>
            <person name="Melin-Larsson M."/>
            <person name="Ljungdahl P.O."/>
            <person name="Forsberg H."/>
        </authorList>
    </citation>
    <scope>FUNCTION</scope>
    <scope>SUBCELLULAR LOCATION</scope>
    <scope>TOPOLOGY</scope>
</reference>
<reference key="7">
    <citation type="journal article" date="2007" name="J. Proteome Res.">
        <title>Large-scale phosphorylation analysis of alpha-factor-arrested Saccharomyces cerevisiae.</title>
        <authorList>
            <person name="Li X."/>
            <person name="Gerber S.A."/>
            <person name="Rudner A.D."/>
            <person name="Beausoleil S.A."/>
            <person name="Haas W."/>
            <person name="Villen J."/>
            <person name="Elias J.E."/>
            <person name="Gygi S.P."/>
        </authorList>
    </citation>
    <scope>PHOSPHORYLATION [LARGE SCALE ANALYSIS] AT SER-358</scope>
    <scope>IDENTIFICATION BY MASS SPECTROMETRY [LARGE SCALE ANALYSIS]</scope>
    <source>
        <strain>ADR376</strain>
    </source>
</reference>
<reference key="8">
    <citation type="journal article" date="2008" name="Mol. Cell. Proteomics">
        <title>A multidimensional chromatography technology for in-depth phosphoproteome analysis.</title>
        <authorList>
            <person name="Albuquerque C.P."/>
            <person name="Smolka M.B."/>
            <person name="Payne S.H."/>
            <person name="Bafna V."/>
            <person name="Eng J."/>
            <person name="Zhou H."/>
        </authorList>
    </citation>
    <scope>PHOSPHORYLATION [LARGE SCALE ANALYSIS] AT SER-358</scope>
    <scope>IDENTIFICATION BY MASS SPECTROMETRY [LARGE SCALE ANALYSIS]</scope>
</reference>
<reference key="9">
    <citation type="journal article" date="2009" name="Science">
        <title>Global analysis of Cdk1 substrate phosphorylation sites provides insights into evolution.</title>
        <authorList>
            <person name="Holt L.J."/>
            <person name="Tuch B.B."/>
            <person name="Villen J."/>
            <person name="Johnson A.D."/>
            <person name="Gygi S.P."/>
            <person name="Morgan D.O."/>
        </authorList>
    </citation>
    <scope>PHOSPHORYLATION [LARGE SCALE ANALYSIS] AT SER-358</scope>
    <scope>IDENTIFICATION BY MASS SPECTROMETRY [LARGE SCALE ANALYSIS]</scope>
</reference>
<reference key="10">
    <citation type="journal article" date="2012" name="Proteomics">
        <title>Sites of ubiquitin attachment in Saccharomyces cerevisiae.</title>
        <authorList>
            <person name="Starita L.M."/>
            <person name="Lo R.S."/>
            <person name="Eng J.K."/>
            <person name="von Haller P.D."/>
            <person name="Fields S."/>
        </authorList>
    </citation>
    <scope>UBIQUITINATION [LARGE SCALE ANALYSIS] AT LYS-367</scope>
    <scope>IDENTIFICATION BY MASS SPECTROMETRY [LARGE SCALE ANALYSIS]</scope>
</reference>
<dbReference type="EMBL" id="Z28123">
    <property type="protein sequence ID" value="CAA81964.1"/>
    <property type="molecule type" value="Genomic_DNA"/>
</dbReference>
<dbReference type="EMBL" id="S44213">
    <property type="protein sequence ID" value="AAB23074.1"/>
    <property type="molecule type" value="Genomic_DNA"/>
</dbReference>
<dbReference type="EMBL" id="BK006944">
    <property type="protein sequence ID" value="DAA09037.1"/>
    <property type="molecule type" value="Genomic_DNA"/>
</dbReference>
<dbReference type="PIR" id="S37953">
    <property type="entry name" value="S37953"/>
</dbReference>
<dbReference type="RefSeq" id="NP_012798.1">
    <property type="nucleotide sequence ID" value="NM_001179690.1"/>
</dbReference>
<dbReference type="SMR" id="P32343"/>
<dbReference type="BioGRID" id="34012">
    <property type="interactions" value="76"/>
</dbReference>
<dbReference type="DIP" id="DIP-5420N"/>
<dbReference type="FunCoup" id="P32343">
    <property type="interactions" value="52"/>
</dbReference>
<dbReference type="IntAct" id="P32343">
    <property type="interactions" value="1"/>
</dbReference>
<dbReference type="MINT" id="P32343"/>
<dbReference type="STRING" id="4932.YKL124W"/>
<dbReference type="GlyCosmos" id="P32343">
    <property type="glycosylation" value="6 sites, No reported glycans"/>
</dbReference>
<dbReference type="GlyGen" id="P32343">
    <property type="glycosylation" value="6 sites"/>
</dbReference>
<dbReference type="iPTMnet" id="P32343"/>
<dbReference type="PaxDb" id="4932-YKL124W"/>
<dbReference type="PeptideAtlas" id="P32343"/>
<dbReference type="EnsemblFungi" id="YKL124W_mRNA">
    <property type="protein sequence ID" value="YKL124W"/>
    <property type="gene ID" value="YKL124W"/>
</dbReference>
<dbReference type="GeneID" id="853735"/>
<dbReference type="KEGG" id="sce:YKL124W"/>
<dbReference type="AGR" id="SGD:S000001607"/>
<dbReference type="SGD" id="S000001607">
    <property type="gene designation" value="SSH4"/>
</dbReference>
<dbReference type="VEuPathDB" id="FungiDB:YKL124W"/>
<dbReference type="eggNOG" id="KOG1477">
    <property type="taxonomic scope" value="Eukaryota"/>
</dbReference>
<dbReference type="HOGENOM" id="CLU_026177_0_0_1"/>
<dbReference type="InParanoid" id="P32343"/>
<dbReference type="OMA" id="FIKDRGI"/>
<dbReference type="OrthoDB" id="258495at2759"/>
<dbReference type="BioCyc" id="YEAST:G3O-31906-MONOMER"/>
<dbReference type="BioGRID-ORCS" id="853735">
    <property type="hits" value="0 hits in 10 CRISPR screens"/>
</dbReference>
<dbReference type="PRO" id="PR:P32343"/>
<dbReference type="Proteomes" id="UP000002311">
    <property type="component" value="Chromosome XI"/>
</dbReference>
<dbReference type="RNAct" id="P32343">
    <property type="molecule type" value="protein"/>
</dbReference>
<dbReference type="GO" id="GO:0005783">
    <property type="term" value="C:endoplasmic reticulum"/>
    <property type="evidence" value="ECO:0007005"/>
    <property type="project" value="SGD"/>
</dbReference>
<dbReference type="GO" id="GO:0010008">
    <property type="term" value="C:endosome membrane"/>
    <property type="evidence" value="ECO:0007669"/>
    <property type="project" value="UniProtKB-SubCell"/>
</dbReference>
<dbReference type="GO" id="GO:0000324">
    <property type="term" value="C:fungal-type vacuole"/>
    <property type="evidence" value="ECO:0000314"/>
    <property type="project" value="SGD"/>
</dbReference>
<dbReference type="GO" id="GO:0005774">
    <property type="term" value="C:vacuolar membrane"/>
    <property type="evidence" value="ECO:0007669"/>
    <property type="project" value="UniProtKB-SubCell"/>
</dbReference>
<dbReference type="GO" id="GO:1990756">
    <property type="term" value="F:ubiquitin-like ligase-substrate adaptor activity"/>
    <property type="evidence" value="ECO:0000315"/>
    <property type="project" value="SGD"/>
</dbReference>
<dbReference type="GO" id="GO:0043328">
    <property type="term" value="P:protein transport to vacuole involved in ubiquitin-dependent protein catabolic process via the multivesicular body sorting pathway"/>
    <property type="evidence" value="ECO:0000316"/>
    <property type="project" value="SGD"/>
</dbReference>
<dbReference type="GO" id="GO:0016192">
    <property type="term" value="P:vesicle-mediated transport"/>
    <property type="evidence" value="ECO:0000316"/>
    <property type="project" value="SGD"/>
</dbReference>
<dbReference type="Gene3D" id="2.60.120.920">
    <property type="match status" value="1"/>
</dbReference>
<dbReference type="InterPro" id="IPR001870">
    <property type="entry name" value="B30.2/SPRY"/>
</dbReference>
<dbReference type="InterPro" id="IPR043136">
    <property type="entry name" value="B30.2/SPRY_sf"/>
</dbReference>
<dbReference type="InterPro" id="IPR013320">
    <property type="entry name" value="ConA-like_dom_sf"/>
</dbReference>
<dbReference type="InterPro" id="IPR003877">
    <property type="entry name" value="SPRY_dom"/>
</dbReference>
<dbReference type="InterPro" id="IPR050618">
    <property type="entry name" value="Ubq-SigPath_Reg"/>
</dbReference>
<dbReference type="PANTHER" id="PTHR12864">
    <property type="entry name" value="RAN BINDING PROTEIN 9-RELATED"/>
    <property type="match status" value="1"/>
</dbReference>
<dbReference type="Pfam" id="PF00622">
    <property type="entry name" value="SPRY"/>
    <property type="match status" value="1"/>
</dbReference>
<dbReference type="SMART" id="SM00449">
    <property type="entry name" value="SPRY"/>
    <property type="match status" value="1"/>
</dbReference>
<dbReference type="SUPFAM" id="SSF49899">
    <property type="entry name" value="Concanavalin A-like lectins/glucanases"/>
    <property type="match status" value="1"/>
</dbReference>
<dbReference type="PROSITE" id="PS50188">
    <property type="entry name" value="B302_SPRY"/>
    <property type="match status" value="1"/>
</dbReference>
<gene>
    <name type="primary">SSH4</name>
    <name type="synonym">MLF4</name>
    <name type="ordered locus">YKL124W</name>
    <name type="ORF">YKL529</name>
</gene>
<evidence type="ECO:0000255" key="1"/>
<evidence type="ECO:0000255" key="2">
    <source>
        <dbReference type="PROSITE-ProRule" id="PRU00548"/>
    </source>
</evidence>
<evidence type="ECO:0000256" key="3">
    <source>
        <dbReference type="SAM" id="MobiDB-lite"/>
    </source>
</evidence>
<evidence type="ECO:0000269" key="4">
    <source>
    </source>
</evidence>
<evidence type="ECO:0000269" key="5">
    <source>
    </source>
</evidence>
<evidence type="ECO:0000269" key="6">
    <source>
    </source>
</evidence>
<evidence type="ECO:0000305" key="7"/>
<evidence type="ECO:0007744" key="8">
    <source>
    </source>
</evidence>
<evidence type="ECO:0007744" key="9">
    <source>
    </source>
</evidence>
<evidence type="ECO:0007744" key="10">
    <source>
    </source>
</evidence>
<evidence type="ECO:0007744" key="11">
    <source>
    </source>
</evidence>
<organism>
    <name type="scientific">Saccharomyces cerevisiae (strain ATCC 204508 / S288c)</name>
    <name type="common">Baker's yeast</name>
    <dbReference type="NCBI Taxonomy" id="559292"/>
    <lineage>
        <taxon>Eukaryota</taxon>
        <taxon>Fungi</taxon>
        <taxon>Dikarya</taxon>
        <taxon>Ascomycota</taxon>
        <taxon>Saccharomycotina</taxon>
        <taxon>Saccharomycetes</taxon>
        <taxon>Saccharomycetales</taxon>
        <taxon>Saccharomycetaceae</taxon>
        <taxon>Saccharomyces</taxon>
    </lineage>
</organism>
<name>SSH4_YEAST</name>
<protein>
    <recommendedName>
        <fullName>Protein SSH4</fullName>
    </recommendedName>
    <alternativeName>
        <fullName>Multicopy suppressor of leflunomide protein 4</fullName>
    </alternativeName>
    <alternativeName>
        <fullName>Suppressor of SHR3 null mutation protein 4</fullName>
    </alternativeName>
</protein>